<proteinExistence type="inferred from homology"/>
<evidence type="ECO:0000255" key="1">
    <source>
        <dbReference type="HAMAP-Rule" id="MF_01576"/>
    </source>
</evidence>
<gene>
    <name evidence="1" type="primary">folD</name>
    <name type="ordered locus">LCABL_18550</name>
</gene>
<name>FOLD_LACCB</name>
<sequence length="283" mass="29597">MATRLDGRAVSKKILADLKQTIAELAQHDVTPTLAVVLVGSNPASEVYVRNKQRRAEDIGVRSLMFRMPEATTQADLLAKVAELNHDPDIDAILVQLPLPAGLDEQAVIDAIDPDKDVDGFSPVSVGRLWANEPTVVASTPYGIMALLDAYDIDVAGKRVVIIGRSNIVGRPLAGLMVNHDATVTIAHSKTRDLKQLAKEADILVVAVGVPHFIGADAVKPGAVVIDVGISRGADGKLLGDVDEAAVAPIASAITPVPGGVGPMTIASLMAQTVTLAKRRANG</sequence>
<keyword id="KW-0028">Amino-acid biosynthesis</keyword>
<keyword id="KW-0368">Histidine biosynthesis</keyword>
<keyword id="KW-0378">Hydrolase</keyword>
<keyword id="KW-0486">Methionine biosynthesis</keyword>
<keyword id="KW-0511">Multifunctional enzyme</keyword>
<keyword id="KW-0521">NADP</keyword>
<keyword id="KW-0554">One-carbon metabolism</keyword>
<keyword id="KW-0560">Oxidoreductase</keyword>
<keyword id="KW-0658">Purine biosynthesis</keyword>
<comment type="function">
    <text evidence="1">Catalyzes the oxidation of 5,10-methylenetetrahydrofolate to 5,10-methenyltetrahydrofolate and then the hydrolysis of 5,10-methenyltetrahydrofolate to 10-formyltetrahydrofolate.</text>
</comment>
<comment type="catalytic activity">
    <reaction evidence="1">
        <text>(6R)-5,10-methylene-5,6,7,8-tetrahydrofolate + NADP(+) = (6R)-5,10-methenyltetrahydrofolate + NADPH</text>
        <dbReference type="Rhea" id="RHEA:22812"/>
        <dbReference type="ChEBI" id="CHEBI:15636"/>
        <dbReference type="ChEBI" id="CHEBI:57455"/>
        <dbReference type="ChEBI" id="CHEBI:57783"/>
        <dbReference type="ChEBI" id="CHEBI:58349"/>
        <dbReference type="EC" id="1.5.1.5"/>
    </reaction>
</comment>
<comment type="catalytic activity">
    <reaction evidence="1">
        <text>(6R)-5,10-methenyltetrahydrofolate + H2O = (6R)-10-formyltetrahydrofolate + H(+)</text>
        <dbReference type="Rhea" id="RHEA:23700"/>
        <dbReference type="ChEBI" id="CHEBI:15377"/>
        <dbReference type="ChEBI" id="CHEBI:15378"/>
        <dbReference type="ChEBI" id="CHEBI:57455"/>
        <dbReference type="ChEBI" id="CHEBI:195366"/>
        <dbReference type="EC" id="3.5.4.9"/>
    </reaction>
</comment>
<comment type="pathway">
    <text evidence="1">One-carbon metabolism; tetrahydrofolate interconversion.</text>
</comment>
<comment type="subunit">
    <text evidence="1">Homodimer.</text>
</comment>
<comment type="similarity">
    <text evidence="1">Belongs to the tetrahydrofolate dehydrogenase/cyclohydrolase family.</text>
</comment>
<protein>
    <recommendedName>
        <fullName evidence="1">Bifunctional protein FolD</fullName>
    </recommendedName>
    <domain>
        <recommendedName>
            <fullName evidence="1">Methylenetetrahydrofolate dehydrogenase</fullName>
            <ecNumber evidence="1">1.5.1.5</ecNumber>
        </recommendedName>
    </domain>
    <domain>
        <recommendedName>
            <fullName evidence="1">Methenyltetrahydrofolate cyclohydrolase</fullName>
            <ecNumber evidence="1">3.5.4.9</ecNumber>
        </recommendedName>
    </domain>
</protein>
<feature type="chain" id="PRO_1000196786" description="Bifunctional protein FolD">
    <location>
        <begin position="1"/>
        <end position="283"/>
    </location>
</feature>
<feature type="binding site" evidence="1">
    <location>
        <begin position="164"/>
        <end position="166"/>
    </location>
    <ligand>
        <name>NADP(+)</name>
        <dbReference type="ChEBI" id="CHEBI:58349"/>
    </ligand>
</feature>
<feature type="binding site" evidence="1">
    <location>
        <position position="189"/>
    </location>
    <ligand>
        <name>NADP(+)</name>
        <dbReference type="ChEBI" id="CHEBI:58349"/>
    </ligand>
</feature>
<feature type="binding site" evidence="1">
    <location>
        <position position="230"/>
    </location>
    <ligand>
        <name>NADP(+)</name>
        <dbReference type="ChEBI" id="CHEBI:58349"/>
    </ligand>
</feature>
<organism>
    <name type="scientific">Lacticaseibacillus casei (strain BL23)</name>
    <name type="common">Lactobacillus casei</name>
    <dbReference type="NCBI Taxonomy" id="543734"/>
    <lineage>
        <taxon>Bacteria</taxon>
        <taxon>Bacillati</taxon>
        <taxon>Bacillota</taxon>
        <taxon>Bacilli</taxon>
        <taxon>Lactobacillales</taxon>
        <taxon>Lactobacillaceae</taxon>
        <taxon>Lacticaseibacillus</taxon>
    </lineage>
</organism>
<dbReference type="EC" id="1.5.1.5" evidence="1"/>
<dbReference type="EC" id="3.5.4.9" evidence="1"/>
<dbReference type="EMBL" id="FM177140">
    <property type="protein sequence ID" value="CAQ66935.1"/>
    <property type="molecule type" value="Genomic_DNA"/>
</dbReference>
<dbReference type="SMR" id="B3WEY4"/>
<dbReference type="KEGG" id="lcb:LCABL_18550"/>
<dbReference type="HOGENOM" id="CLU_034045_2_1_9"/>
<dbReference type="UniPathway" id="UPA00193"/>
<dbReference type="GO" id="GO:0005829">
    <property type="term" value="C:cytosol"/>
    <property type="evidence" value="ECO:0007669"/>
    <property type="project" value="TreeGrafter"/>
</dbReference>
<dbReference type="GO" id="GO:0004477">
    <property type="term" value="F:methenyltetrahydrofolate cyclohydrolase activity"/>
    <property type="evidence" value="ECO:0007669"/>
    <property type="project" value="UniProtKB-UniRule"/>
</dbReference>
<dbReference type="GO" id="GO:0004488">
    <property type="term" value="F:methylenetetrahydrofolate dehydrogenase (NADP+) activity"/>
    <property type="evidence" value="ECO:0007669"/>
    <property type="project" value="UniProtKB-UniRule"/>
</dbReference>
<dbReference type="GO" id="GO:0000105">
    <property type="term" value="P:L-histidine biosynthetic process"/>
    <property type="evidence" value="ECO:0007669"/>
    <property type="project" value="UniProtKB-KW"/>
</dbReference>
<dbReference type="GO" id="GO:0009086">
    <property type="term" value="P:methionine biosynthetic process"/>
    <property type="evidence" value="ECO:0007669"/>
    <property type="project" value="UniProtKB-KW"/>
</dbReference>
<dbReference type="GO" id="GO:0006164">
    <property type="term" value="P:purine nucleotide biosynthetic process"/>
    <property type="evidence" value="ECO:0007669"/>
    <property type="project" value="UniProtKB-KW"/>
</dbReference>
<dbReference type="GO" id="GO:0035999">
    <property type="term" value="P:tetrahydrofolate interconversion"/>
    <property type="evidence" value="ECO:0007669"/>
    <property type="project" value="UniProtKB-UniRule"/>
</dbReference>
<dbReference type="CDD" id="cd01080">
    <property type="entry name" value="NAD_bind_m-THF_DH_Cyclohyd"/>
    <property type="match status" value="1"/>
</dbReference>
<dbReference type="FunFam" id="3.40.50.720:FF:000094">
    <property type="entry name" value="Bifunctional protein FolD"/>
    <property type="match status" value="1"/>
</dbReference>
<dbReference type="FunFam" id="3.40.50.10860:FF:000005">
    <property type="entry name" value="C-1-tetrahydrofolate synthase, cytoplasmic, putative"/>
    <property type="match status" value="1"/>
</dbReference>
<dbReference type="Gene3D" id="3.40.50.10860">
    <property type="entry name" value="Leucine Dehydrogenase, chain A, domain 1"/>
    <property type="match status" value="1"/>
</dbReference>
<dbReference type="Gene3D" id="3.40.50.720">
    <property type="entry name" value="NAD(P)-binding Rossmann-like Domain"/>
    <property type="match status" value="1"/>
</dbReference>
<dbReference type="HAMAP" id="MF_01576">
    <property type="entry name" value="THF_DHG_CYH"/>
    <property type="match status" value="1"/>
</dbReference>
<dbReference type="InterPro" id="IPR046346">
    <property type="entry name" value="Aminoacid_DH-like_N_sf"/>
</dbReference>
<dbReference type="InterPro" id="IPR036291">
    <property type="entry name" value="NAD(P)-bd_dom_sf"/>
</dbReference>
<dbReference type="InterPro" id="IPR000672">
    <property type="entry name" value="THF_DH/CycHdrlase"/>
</dbReference>
<dbReference type="InterPro" id="IPR020630">
    <property type="entry name" value="THF_DH/CycHdrlase_cat_dom"/>
</dbReference>
<dbReference type="InterPro" id="IPR020867">
    <property type="entry name" value="THF_DH/CycHdrlase_CS"/>
</dbReference>
<dbReference type="InterPro" id="IPR020631">
    <property type="entry name" value="THF_DH/CycHdrlase_NAD-bd_dom"/>
</dbReference>
<dbReference type="NCBIfam" id="NF010766">
    <property type="entry name" value="PRK14169.1"/>
    <property type="match status" value="1"/>
</dbReference>
<dbReference type="NCBIfam" id="NF010783">
    <property type="entry name" value="PRK14186.1"/>
    <property type="match status" value="1"/>
</dbReference>
<dbReference type="PANTHER" id="PTHR48099:SF5">
    <property type="entry name" value="C-1-TETRAHYDROFOLATE SYNTHASE, CYTOPLASMIC"/>
    <property type="match status" value="1"/>
</dbReference>
<dbReference type="PANTHER" id="PTHR48099">
    <property type="entry name" value="C-1-TETRAHYDROFOLATE SYNTHASE, CYTOPLASMIC-RELATED"/>
    <property type="match status" value="1"/>
</dbReference>
<dbReference type="Pfam" id="PF00763">
    <property type="entry name" value="THF_DHG_CYH"/>
    <property type="match status" value="1"/>
</dbReference>
<dbReference type="Pfam" id="PF02882">
    <property type="entry name" value="THF_DHG_CYH_C"/>
    <property type="match status" value="1"/>
</dbReference>
<dbReference type="PRINTS" id="PR00085">
    <property type="entry name" value="THFDHDRGNASE"/>
</dbReference>
<dbReference type="SUPFAM" id="SSF53223">
    <property type="entry name" value="Aminoacid dehydrogenase-like, N-terminal domain"/>
    <property type="match status" value="1"/>
</dbReference>
<dbReference type="SUPFAM" id="SSF51735">
    <property type="entry name" value="NAD(P)-binding Rossmann-fold domains"/>
    <property type="match status" value="1"/>
</dbReference>
<dbReference type="PROSITE" id="PS00766">
    <property type="entry name" value="THF_DHG_CYH_1"/>
    <property type="match status" value="1"/>
</dbReference>
<dbReference type="PROSITE" id="PS00767">
    <property type="entry name" value="THF_DHG_CYH_2"/>
    <property type="match status" value="1"/>
</dbReference>
<reference key="1">
    <citation type="submission" date="2008-06" db="EMBL/GenBank/DDBJ databases">
        <title>Lactobacillus casei BL23 complete genome sequence.</title>
        <authorList>
            <person name="Maze A."/>
            <person name="Boel G."/>
            <person name="Bourand A."/>
            <person name="Loux V."/>
            <person name="Gibrat J.F."/>
            <person name="Zuniga M."/>
            <person name="Hartke A."/>
            <person name="Deutscher J."/>
        </authorList>
    </citation>
    <scope>NUCLEOTIDE SEQUENCE [LARGE SCALE GENOMIC DNA]</scope>
    <source>
        <strain>BL23</strain>
    </source>
</reference>
<accession>B3WEY4</accession>